<feature type="chain" id="PRO_1000101191" description="Glycine--tRNA ligase alpha subunit">
    <location>
        <begin position="1"/>
        <end position="296"/>
    </location>
</feature>
<keyword id="KW-0030">Aminoacyl-tRNA synthetase</keyword>
<keyword id="KW-0067">ATP-binding</keyword>
<keyword id="KW-0963">Cytoplasm</keyword>
<keyword id="KW-0436">Ligase</keyword>
<keyword id="KW-0547">Nucleotide-binding</keyword>
<keyword id="KW-0648">Protein biosynthesis</keyword>
<name>SYGA_FRATF</name>
<organism>
    <name type="scientific">Francisella tularensis subsp. holarctica (strain FTNF002-00 / FTA)</name>
    <dbReference type="NCBI Taxonomy" id="458234"/>
    <lineage>
        <taxon>Bacteria</taxon>
        <taxon>Pseudomonadati</taxon>
        <taxon>Pseudomonadota</taxon>
        <taxon>Gammaproteobacteria</taxon>
        <taxon>Thiotrichales</taxon>
        <taxon>Francisellaceae</taxon>
        <taxon>Francisella</taxon>
    </lineage>
</organism>
<accession>A7NAI8</accession>
<evidence type="ECO:0000255" key="1">
    <source>
        <dbReference type="HAMAP-Rule" id="MF_00254"/>
    </source>
</evidence>
<proteinExistence type="inferred from homology"/>
<comment type="catalytic activity">
    <reaction evidence="1">
        <text>tRNA(Gly) + glycine + ATP = glycyl-tRNA(Gly) + AMP + diphosphate</text>
        <dbReference type="Rhea" id="RHEA:16013"/>
        <dbReference type="Rhea" id="RHEA-COMP:9664"/>
        <dbReference type="Rhea" id="RHEA-COMP:9683"/>
        <dbReference type="ChEBI" id="CHEBI:30616"/>
        <dbReference type="ChEBI" id="CHEBI:33019"/>
        <dbReference type="ChEBI" id="CHEBI:57305"/>
        <dbReference type="ChEBI" id="CHEBI:78442"/>
        <dbReference type="ChEBI" id="CHEBI:78522"/>
        <dbReference type="ChEBI" id="CHEBI:456215"/>
        <dbReference type="EC" id="6.1.1.14"/>
    </reaction>
</comment>
<comment type="subunit">
    <text evidence="1">Tetramer of two alpha and two beta subunits.</text>
</comment>
<comment type="subcellular location">
    <subcellularLocation>
        <location evidence="1">Cytoplasm</location>
    </subcellularLocation>
</comment>
<comment type="similarity">
    <text evidence="1">Belongs to the class-II aminoacyl-tRNA synthetase family.</text>
</comment>
<reference key="1">
    <citation type="journal article" date="2009" name="PLoS ONE">
        <title>Complete genome sequence of Francisella tularensis subspecies holarctica FTNF002-00.</title>
        <authorList>
            <person name="Barabote R.D."/>
            <person name="Xie G."/>
            <person name="Brettin T.S."/>
            <person name="Hinrichs S.H."/>
            <person name="Fey P.D."/>
            <person name="Jay J.J."/>
            <person name="Engle J.L."/>
            <person name="Godbole S.D."/>
            <person name="Noronha J.M."/>
            <person name="Scheuermann R.H."/>
            <person name="Zhou L.W."/>
            <person name="Lion C."/>
            <person name="Dempsey M.P."/>
        </authorList>
    </citation>
    <scope>NUCLEOTIDE SEQUENCE [LARGE SCALE GENOMIC DNA]</scope>
    <source>
        <strain>FTNF002-00 / FTA</strain>
    </source>
</reference>
<dbReference type="EC" id="6.1.1.14" evidence="1"/>
<dbReference type="EMBL" id="CP000803">
    <property type="protein sequence ID" value="ABU60991.1"/>
    <property type="molecule type" value="Genomic_DNA"/>
</dbReference>
<dbReference type="RefSeq" id="WP_003027043.1">
    <property type="nucleotide sequence ID" value="NC_009749.1"/>
</dbReference>
<dbReference type="SMR" id="A7NAI8"/>
<dbReference type="KEGG" id="fta:FTA_0515"/>
<dbReference type="HOGENOM" id="CLU_057066_1_0_6"/>
<dbReference type="GO" id="GO:0005829">
    <property type="term" value="C:cytosol"/>
    <property type="evidence" value="ECO:0007669"/>
    <property type="project" value="TreeGrafter"/>
</dbReference>
<dbReference type="GO" id="GO:0005524">
    <property type="term" value="F:ATP binding"/>
    <property type="evidence" value="ECO:0007669"/>
    <property type="project" value="UniProtKB-UniRule"/>
</dbReference>
<dbReference type="GO" id="GO:0004820">
    <property type="term" value="F:glycine-tRNA ligase activity"/>
    <property type="evidence" value="ECO:0007669"/>
    <property type="project" value="UniProtKB-UniRule"/>
</dbReference>
<dbReference type="GO" id="GO:0006426">
    <property type="term" value="P:glycyl-tRNA aminoacylation"/>
    <property type="evidence" value="ECO:0007669"/>
    <property type="project" value="UniProtKB-UniRule"/>
</dbReference>
<dbReference type="CDD" id="cd00733">
    <property type="entry name" value="GlyRS_alpha_core"/>
    <property type="match status" value="1"/>
</dbReference>
<dbReference type="FunFam" id="3.30.930.10:FF:000006">
    <property type="entry name" value="Glycine--tRNA ligase alpha subunit"/>
    <property type="match status" value="1"/>
</dbReference>
<dbReference type="Gene3D" id="3.30.930.10">
    <property type="entry name" value="Bira Bifunctional Protein, Domain 2"/>
    <property type="match status" value="1"/>
</dbReference>
<dbReference type="Gene3D" id="1.20.58.180">
    <property type="entry name" value="Class II aaRS and biotin synthetases, domain 2"/>
    <property type="match status" value="1"/>
</dbReference>
<dbReference type="HAMAP" id="MF_00254">
    <property type="entry name" value="Gly_tRNA_synth_alpha"/>
    <property type="match status" value="1"/>
</dbReference>
<dbReference type="InterPro" id="IPR045864">
    <property type="entry name" value="aa-tRNA-synth_II/BPL/LPL"/>
</dbReference>
<dbReference type="InterPro" id="IPR006194">
    <property type="entry name" value="Gly-tRNA-synth_heterodimer"/>
</dbReference>
<dbReference type="InterPro" id="IPR002310">
    <property type="entry name" value="Gly-tRNA_ligase_asu"/>
</dbReference>
<dbReference type="NCBIfam" id="TIGR00388">
    <property type="entry name" value="glyQ"/>
    <property type="match status" value="1"/>
</dbReference>
<dbReference type="NCBIfam" id="NF006827">
    <property type="entry name" value="PRK09348.1"/>
    <property type="match status" value="1"/>
</dbReference>
<dbReference type="PANTHER" id="PTHR30075:SF2">
    <property type="entry name" value="GLYCINE--TRNA LIGASE, CHLOROPLASTIC_MITOCHONDRIAL 2"/>
    <property type="match status" value="1"/>
</dbReference>
<dbReference type="PANTHER" id="PTHR30075">
    <property type="entry name" value="GLYCYL-TRNA SYNTHETASE"/>
    <property type="match status" value="1"/>
</dbReference>
<dbReference type="Pfam" id="PF02091">
    <property type="entry name" value="tRNA-synt_2e"/>
    <property type="match status" value="1"/>
</dbReference>
<dbReference type="PRINTS" id="PR01044">
    <property type="entry name" value="TRNASYNTHGA"/>
</dbReference>
<dbReference type="SUPFAM" id="SSF55681">
    <property type="entry name" value="Class II aaRS and biotin synthetases"/>
    <property type="match status" value="1"/>
</dbReference>
<dbReference type="PROSITE" id="PS50861">
    <property type="entry name" value="AA_TRNA_LIGASE_II_GLYAB"/>
    <property type="match status" value="1"/>
</dbReference>
<gene>
    <name evidence="1" type="primary">glyQ</name>
    <name type="ordered locus">FTA_0515</name>
</gene>
<protein>
    <recommendedName>
        <fullName evidence="1">Glycine--tRNA ligase alpha subunit</fullName>
        <ecNumber evidence="1">6.1.1.14</ecNumber>
    </recommendedName>
    <alternativeName>
        <fullName evidence="1">Glycyl-tRNA synthetase alpha subunit</fullName>
        <shortName evidence="1">GlyRS</shortName>
    </alternativeName>
</protein>
<sequence length="296" mass="34311">MLTFQEIILKLHHYWASKGCAIVQPLDMEVGAGTFHPATTLRAIGPEPWTAAYVQPSRRPTDGRYGENPNRTQHYYQYQVVMKPSPDDIQELYLGSLRELGIDPLENDIRFVEDNWESPTLGAWGLGWEVWSNGMEITQFTYFQQVGGLECKPVMGEITYGLERLAMYIQNVDSMYDILWANTQNGPLYYRDVFLQNEVEMSTYNFEEANVEELFKQFDLLEKEGYRLVEKNLPIPAYEFVLKASHTFNLLDARHAISVTERQGYILRVRKLALEVAKEYYSAREKSGFPAFKKDN</sequence>